<comment type="function">
    <text evidence="1">One of the primary rRNA binding proteins, it binds directly to 16S rRNA central domain where it helps coordinate assembly of the platform of the 30S subunit.</text>
</comment>
<comment type="subunit">
    <text evidence="1">Part of the 30S ribosomal subunit. Contacts proteins S5 and S12.</text>
</comment>
<comment type="similarity">
    <text evidence="1">Belongs to the universal ribosomal protein uS8 family.</text>
</comment>
<evidence type="ECO:0000255" key="1">
    <source>
        <dbReference type="HAMAP-Rule" id="MF_01302"/>
    </source>
</evidence>
<evidence type="ECO:0000305" key="2"/>
<protein>
    <recommendedName>
        <fullName evidence="1">Small ribosomal subunit protein uS8</fullName>
    </recommendedName>
    <alternativeName>
        <fullName evidence="2">30S ribosomal protein S8</fullName>
    </alternativeName>
</protein>
<accession>C4KZN2</accession>
<organism>
    <name type="scientific">Exiguobacterium sp. (strain ATCC BAA-1283 / AT1b)</name>
    <dbReference type="NCBI Taxonomy" id="360911"/>
    <lineage>
        <taxon>Bacteria</taxon>
        <taxon>Bacillati</taxon>
        <taxon>Bacillota</taxon>
        <taxon>Bacilli</taxon>
        <taxon>Bacillales</taxon>
        <taxon>Bacillales Family XII. Incertae Sedis</taxon>
        <taxon>Exiguobacterium</taxon>
    </lineage>
</organism>
<reference key="1">
    <citation type="journal article" date="2011" name="J. Bacteriol.">
        <title>Complete genome sequence of the Thermophilic Bacterium Exiguobacterium sp. AT1b.</title>
        <authorList>
            <person name="Vishnivetskaya T.A."/>
            <person name="Lucas S."/>
            <person name="Copeland A."/>
            <person name="Lapidus A."/>
            <person name="Glavina del Rio T."/>
            <person name="Dalin E."/>
            <person name="Tice H."/>
            <person name="Bruce D.C."/>
            <person name="Goodwin L.A."/>
            <person name="Pitluck S."/>
            <person name="Saunders E."/>
            <person name="Brettin T."/>
            <person name="Detter C."/>
            <person name="Han C."/>
            <person name="Larimer F."/>
            <person name="Land M.L."/>
            <person name="Hauser L.J."/>
            <person name="Kyrpides N.C."/>
            <person name="Ovchinnikova G."/>
            <person name="Kathariou S."/>
            <person name="Ramaley R.F."/>
            <person name="Rodrigues D.F."/>
            <person name="Hendrix C."/>
            <person name="Richardson P."/>
            <person name="Tiedje J.M."/>
        </authorList>
    </citation>
    <scope>NUCLEOTIDE SEQUENCE [LARGE SCALE GENOMIC DNA]</scope>
    <source>
        <strain>ATCC BAA-1283 / AT1b</strain>
    </source>
</reference>
<sequence>MVMTDPIADMLTRIRNANMVRHEKMELPASNIKREIAEILKREGFIRDVEYIEDAKQGTLRLFLKYGASNERVITGLKRISKPGLRVYAKADEVPKVLGGLGIAVLSTSKGLMTDKEARQQQVGGEVIAYIW</sequence>
<name>RS8_EXISA</name>
<dbReference type="EMBL" id="CP001615">
    <property type="protein sequence ID" value="ACQ70545.1"/>
    <property type="molecule type" value="Genomic_DNA"/>
</dbReference>
<dbReference type="RefSeq" id="WP_012727663.1">
    <property type="nucleotide sequence ID" value="NZ_MOEL01000001.1"/>
</dbReference>
<dbReference type="SMR" id="C4KZN2"/>
<dbReference type="STRING" id="360911.EAT1b_1619"/>
<dbReference type="GeneID" id="94370757"/>
<dbReference type="KEGG" id="eat:EAT1b_1619"/>
<dbReference type="eggNOG" id="COG0096">
    <property type="taxonomic scope" value="Bacteria"/>
</dbReference>
<dbReference type="HOGENOM" id="CLU_098428_0_2_9"/>
<dbReference type="OrthoDB" id="9802617at2"/>
<dbReference type="Proteomes" id="UP000000716">
    <property type="component" value="Chromosome"/>
</dbReference>
<dbReference type="GO" id="GO:1990904">
    <property type="term" value="C:ribonucleoprotein complex"/>
    <property type="evidence" value="ECO:0007669"/>
    <property type="project" value="UniProtKB-KW"/>
</dbReference>
<dbReference type="GO" id="GO:0005840">
    <property type="term" value="C:ribosome"/>
    <property type="evidence" value="ECO:0007669"/>
    <property type="project" value="UniProtKB-KW"/>
</dbReference>
<dbReference type="GO" id="GO:0019843">
    <property type="term" value="F:rRNA binding"/>
    <property type="evidence" value="ECO:0007669"/>
    <property type="project" value="UniProtKB-UniRule"/>
</dbReference>
<dbReference type="GO" id="GO:0003735">
    <property type="term" value="F:structural constituent of ribosome"/>
    <property type="evidence" value="ECO:0007669"/>
    <property type="project" value="InterPro"/>
</dbReference>
<dbReference type="GO" id="GO:0006412">
    <property type="term" value="P:translation"/>
    <property type="evidence" value="ECO:0007669"/>
    <property type="project" value="UniProtKB-UniRule"/>
</dbReference>
<dbReference type="FunFam" id="3.30.1370.30:FF:000002">
    <property type="entry name" value="30S ribosomal protein S8"/>
    <property type="match status" value="1"/>
</dbReference>
<dbReference type="FunFam" id="3.30.1490.10:FF:000001">
    <property type="entry name" value="30S ribosomal protein S8"/>
    <property type="match status" value="1"/>
</dbReference>
<dbReference type="Gene3D" id="3.30.1370.30">
    <property type="match status" value="1"/>
</dbReference>
<dbReference type="Gene3D" id="3.30.1490.10">
    <property type="match status" value="1"/>
</dbReference>
<dbReference type="HAMAP" id="MF_01302_B">
    <property type="entry name" value="Ribosomal_uS8_B"/>
    <property type="match status" value="1"/>
</dbReference>
<dbReference type="InterPro" id="IPR000630">
    <property type="entry name" value="Ribosomal_uS8"/>
</dbReference>
<dbReference type="InterPro" id="IPR047863">
    <property type="entry name" value="Ribosomal_uS8_CS"/>
</dbReference>
<dbReference type="InterPro" id="IPR035987">
    <property type="entry name" value="Ribosomal_uS8_sf"/>
</dbReference>
<dbReference type="NCBIfam" id="NF001109">
    <property type="entry name" value="PRK00136.1"/>
    <property type="match status" value="1"/>
</dbReference>
<dbReference type="PANTHER" id="PTHR11758">
    <property type="entry name" value="40S RIBOSOMAL PROTEIN S15A"/>
    <property type="match status" value="1"/>
</dbReference>
<dbReference type="Pfam" id="PF00410">
    <property type="entry name" value="Ribosomal_S8"/>
    <property type="match status" value="1"/>
</dbReference>
<dbReference type="SUPFAM" id="SSF56047">
    <property type="entry name" value="Ribosomal protein S8"/>
    <property type="match status" value="1"/>
</dbReference>
<dbReference type="PROSITE" id="PS00053">
    <property type="entry name" value="RIBOSOMAL_S8"/>
    <property type="match status" value="1"/>
</dbReference>
<feature type="chain" id="PRO_1000214251" description="Small ribosomal subunit protein uS8">
    <location>
        <begin position="1"/>
        <end position="132"/>
    </location>
</feature>
<gene>
    <name evidence="1" type="primary">rpsH</name>
    <name type="ordered locus">EAT1b_1619</name>
</gene>
<proteinExistence type="inferred from homology"/>
<keyword id="KW-0687">Ribonucleoprotein</keyword>
<keyword id="KW-0689">Ribosomal protein</keyword>
<keyword id="KW-0694">RNA-binding</keyword>
<keyword id="KW-0699">rRNA-binding</keyword>